<gene>
    <name evidence="1" type="primary">fbpC</name>
    <name type="ordered locus">NMA0842</name>
</gene>
<proteinExistence type="inferred from homology"/>
<keyword id="KW-0067">ATP-binding</keyword>
<keyword id="KW-0997">Cell inner membrane</keyword>
<keyword id="KW-1003">Cell membrane</keyword>
<keyword id="KW-0406">Ion transport</keyword>
<keyword id="KW-0408">Iron</keyword>
<keyword id="KW-0410">Iron transport</keyword>
<keyword id="KW-0472">Membrane</keyword>
<keyword id="KW-0547">Nucleotide-binding</keyword>
<keyword id="KW-1278">Translocase</keyword>
<keyword id="KW-0813">Transport</keyword>
<comment type="function">
    <text evidence="1">Part of the ABC transporter complex FbpABC involved in Fe(3+) ions import. Responsible for energy coupling to the transport system.</text>
</comment>
<comment type="catalytic activity">
    <reaction evidence="1">
        <text>Fe(3+)(out) + ATP + H2O = Fe(3+)(in) + ADP + phosphate + H(+)</text>
        <dbReference type="Rhea" id="RHEA:12332"/>
        <dbReference type="ChEBI" id="CHEBI:15377"/>
        <dbReference type="ChEBI" id="CHEBI:15378"/>
        <dbReference type="ChEBI" id="CHEBI:29034"/>
        <dbReference type="ChEBI" id="CHEBI:30616"/>
        <dbReference type="ChEBI" id="CHEBI:43474"/>
        <dbReference type="ChEBI" id="CHEBI:456216"/>
        <dbReference type="EC" id="7.2.2.7"/>
    </reaction>
</comment>
<comment type="subunit">
    <text evidence="1">The complex is composed of two ATP-binding proteins (FbpC), two transmembrane proteins (FbpB) and a solute-binding protein (FbpA).</text>
</comment>
<comment type="subcellular location">
    <subcellularLocation>
        <location evidence="1">Cell inner membrane</location>
        <topology evidence="1">Peripheral membrane protein</topology>
    </subcellularLocation>
</comment>
<comment type="similarity">
    <text evidence="1">Belongs to the ABC transporter superfamily. Fe(3+) ion importer (TC 3.A.1.10) family.</text>
</comment>
<accession>Q9JVH1</accession>
<accession>A1IQP6</accession>
<protein>
    <recommendedName>
        <fullName evidence="1">Fe(3+) ions import ATP-binding protein FbpC</fullName>
        <ecNumber evidence="1">7.2.2.7</ecNumber>
    </recommendedName>
</protein>
<evidence type="ECO:0000255" key="1">
    <source>
        <dbReference type="HAMAP-Rule" id="MF_01706"/>
    </source>
</evidence>
<dbReference type="EC" id="7.2.2.7" evidence="1"/>
<dbReference type="EMBL" id="AL157959">
    <property type="protein sequence ID" value="CAM08080.1"/>
    <property type="molecule type" value="Genomic_DNA"/>
</dbReference>
<dbReference type="PIR" id="F81929">
    <property type="entry name" value="F81929"/>
</dbReference>
<dbReference type="RefSeq" id="WP_002219640.1">
    <property type="nucleotide sequence ID" value="NC_003116.1"/>
</dbReference>
<dbReference type="SMR" id="Q9JVH1"/>
<dbReference type="EnsemblBacteria" id="CAM08080">
    <property type="protein sequence ID" value="CAM08080"/>
    <property type="gene ID" value="NMA0842"/>
</dbReference>
<dbReference type="GeneID" id="93386534"/>
<dbReference type="KEGG" id="nma:NMA0842"/>
<dbReference type="HOGENOM" id="CLU_000604_1_1_4"/>
<dbReference type="Proteomes" id="UP000000626">
    <property type="component" value="Chromosome"/>
</dbReference>
<dbReference type="GO" id="GO:0005886">
    <property type="term" value="C:plasma membrane"/>
    <property type="evidence" value="ECO:0007669"/>
    <property type="project" value="UniProtKB-SubCell"/>
</dbReference>
<dbReference type="GO" id="GO:0015408">
    <property type="term" value="F:ABC-type ferric iron transporter activity"/>
    <property type="evidence" value="ECO:0007669"/>
    <property type="project" value="UniProtKB-EC"/>
</dbReference>
<dbReference type="GO" id="GO:0005524">
    <property type="term" value="F:ATP binding"/>
    <property type="evidence" value="ECO:0007669"/>
    <property type="project" value="UniProtKB-KW"/>
</dbReference>
<dbReference type="GO" id="GO:0016887">
    <property type="term" value="F:ATP hydrolysis activity"/>
    <property type="evidence" value="ECO:0007669"/>
    <property type="project" value="InterPro"/>
</dbReference>
<dbReference type="CDD" id="cd03259">
    <property type="entry name" value="ABC_Carb_Solutes_like"/>
    <property type="match status" value="1"/>
</dbReference>
<dbReference type="FunFam" id="3.40.50.300:FF:000425">
    <property type="entry name" value="Probable ABC transporter, ATP-binding subunit"/>
    <property type="match status" value="1"/>
</dbReference>
<dbReference type="Gene3D" id="2.40.50.450">
    <property type="match status" value="1"/>
</dbReference>
<dbReference type="Gene3D" id="2.40.50.470">
    <property type="match status" value="1"/>
</dbReference>
<dbReference type="Gene3D" id="3.40.50.300">
    <property type="entry name" value="P-loop containing nucleotide triphosphate hydrolases"/>
    <property type="match status" value="1"/>
</dbReference>
<dbReference type="InterPro" id="IPR003593">
    <property type="entry name" value="AAA+_ATPase"/>
</dbReference>
<dbReference type="InterPro" id="IPR050093">
    <property type="entry name" value="ABC_SmlMolc_Importer"/>
</dbReference>
<dbReference type="InterPro" id="IPR003439">
    <property type="entry name" value="ABC_transporter-like_ATP-bd"/>
</dbReference>
<dbReference type="InterPro" id="IPR017871">
    <property type="entry name" value="ABC_transporter-like_CS"/>
</dbReference>
<dbReference type="InterPro" id="IPR015853">
    <property type="entry name" value="ABC_transpr_FbpC"/>
</dbReference>
<dbReference type="InterPro" id="IPR041230">
    <property type="entry name" value="FbpC_C"/>
</dbReference>
<dbReference type="InterPro" id="IPR055223">
    <property type="entry name" value="FbpC_RD"/>
</dbReference>
<dbReference type="InterPro" id="IPR008995">
    <property type="entry name" value="Mo/tungstate-bd_C_term_dom"/>
</dbReference>
<dbReference type="InterPro" id="IPR027417">
    <property type="entry name" value="P-loop_NTPase"/>
</dbReference>
<dbReference type="PANTHER" id="PTHR42781:SF5">
    <property type="entry name" value="PUTRESCINE TRANSPORT ATP-BINDING PROTEIN POTG"/>
    <property type="match status" value="1"/>
</dbReference>
<dbReference type="PANTHER" id="PTHR42781">
    <property type="entry name" value="SPERMIDINE/PUTRESCINE IMPORT ATP-BINDING PROTEIN POTA"/>
    <property type="match status" value="1"/>
</dbReference>
<dbReference type="Pfam" id="PF00005">
    <property type="entry name" value="ABC_tran"/>
    <property type="match status" value="1"/>
</dbReference>
<dbReference type="Pfam" id="PF22443">
    <property type="entry name" value="FbpC-like_RD"/>
    <property type="match status" value="1"/>
</dbReference>
<dbReference type="Pfam" id="PF17845">
    <property type="entry name" value="FbpC_C_terminal"/>
    <property type="match status" value="1"/>
</dbReference>
<dbReference type="SMART" id="SM00382">
    <property type="entry name" value="AAA"/>
    <property type="match status" value="1"/>
</dbReference>
<dbReference type="SUPFAM" id="SSF50331">
    <property type="entry name" value="MOP-like"/>
    <property type="match status" value="1"/>
</dbReference>
<dbReference type="SUPFAM" id="SSF52540">
    <property type="entry name" value="P-loop containing nucleoside triphosphate hydrolases"/>
    <property type="match status" value="1"/>
</dbReference>
<dbReference type="PROSITE" id="PS00211">
    <property type="entry name" value="ABC_TRANSPORTER_1"/>
    <property type="match status" value="1"/>
</dbReference>
<dbReference type="PROSITE" id="PS50893">
    <property type="entry name" value="ABC_TRANSPORTER_2"/>
    <property type="match status" value="1"/>
</dbReference>
<dbReference type="PROSITE" id="PS51242">
    <property type="entry name" value="FBPC"/>
    <property type="match status" value="1"/>
</dbReference>
<feature type="chain" id="PRO_0000092356" description="Fe(3+) ions import ATP-binding protein FbpC">
    <location>
        <begin position="1"/>
        <end position="352"/>
    </location>
</feature>
<feature type="domain" description="ABC transporter" evidence="1">
    <location>
        <begin position="5"/>
        <end position="239"/>
    </location>
</feature>
<feature type="binding site" evidence="1">
    <location>
        <begin position="37"/>
        <end position="44"/>
    </location>
    <ligand>
        <name>ATP</name>
        <dbReference type="ChEBI" id="CHEBI:30616"/>
    </ligand>
</feature>
<sequence length="352" mass="37881">MTAALHIGHLSKSFQNTPVLNDISLSLDPGEILFIVGASGCGKTTLLRCLAGFEQPDFGEISLSGRTIFSKNTNLPVRERRLGYVVQEGVLFPHLTVYRNTAYGLGNGKGKTAQERQRIEAMLELTGISELAGRYPHELSGGQQQRVALARALAPDPELILLDEPFSALDEQLRRQIREDMIAALRANGKSAVFVSHDREEALQYADRIAVMKQGRILQTASPHELYRQPADLDAALFIGEGIVFPAALNADGTADCGLGRLPVQSGAPAGTRGTLLIRPEQFSLHPHSAPTASIHAVVLKTTPKARHTEISLRVGQTVLTLNLPSAPTLSDGISAVLHLDGPALFFPGNTL</sequence>
<organism>
    <name type="scientific">Neisseria meningitidis serogroup A / serotype 4A (strain DSM 15465 / Z2491)</name>
    <dbReference type="NCBI Taxonomy" id="122587"/>
    <lineage>
        <taxon>Bacteria</taxon>
        <taxon>Pseudomonadati</taxon>
        <taxon>Pseudomonadota</taxon>
        <taxon>Betaproteobacteria</taxon>
        <taxon>Neisseriales</taxon>
        <taxon>Neisseriaceae</taxon>
        <taxon>Neisseria</taxon>
    </lineage>
</organism>
<reference key="1">
    <citation type="journal article" date="2000" name="Nature">
        <title>Complete DNA sequence of a serogroup A strain of Neisseria meningitidis Z2491.</title>
        <authorList>
            <person name="Parkhill J."/>
            <person name="Achtman M."/>
            <person name="James K.D."/>
            <person name="Bentley S.D."/>
            <person name="Churcher C.M."/>
            <person name="Klee S.R."/>
            <person name="Morelli G."/>
            <person name="Basham D."/>
            <person name="Brown D."/>
            <person name="Chillingworth T."/>
            <person name="Davies R.M."/>
            <person name="Davis P."/>
            <person name="Devlin K."/>
            <person name="Feltwell T."/>
            <person name="Hamlin N."/>
            <person name="Holroyd S."/>
            <person name="Jagels K."/>
            <person name="Leather S."/>
            <person name="Moule S."/>
            <person name="Mungall K.L."/>
            <person name="Quail M.A."/>
            <person name="Rajandream M.A."/>
            <person name="Rutherford K.M."/>
            <person name="Simmonds M."/>
            <person name="Skelton J."/>
            <person name="Whitehead S."/>
            <person name="Spratt B.G."/>
            <person name="Barrell B.G."/>
        </authorList>
    </citation>
    <scope>NUCLEOTIDE SEQUENCE [LARGE SCALE GENOMIC DNA]</scope>
    <source>
        <strain>DSM 15465 / Z2491</strain>
    </source>
</reference>
<name>FBPC_NEIMA</name>